<evidence type="ECO:0000255" key="1">
    <source>
        <dbReference type="HAMAP-Rule" id="MF_00531"/>
    </source>
</evidence>
<evidence type="ECO:0000305" key="2"/>
<sequence>MARSIKKGPFIEKSLYQKVLASSGREKRVVIKTYSRASTIIPEMVSLTISVYNGKSFIPVYITEDLVGHKLGEFSPTRIFRGHAKSDKKGRK</sequence>
<organism>
    <name type="scientific">Borrelia hermsii (strain HS1 / DAH)</name>
    <dbReference type="NCBI Taxonomy" id="314723"/>
    <lineage>
        <taxon>Bacteria</taxon>
        <taxon>Pseudomonadati</taxon>
        <taxon>Spirochaetota</taxon>
        <taxon>Spirochaetia</taxon>
        <taxon>Spirochaetales</taxon>
        <taxon>Borreliaceae</taxon>
        <taxon>Borrelia</taxon>
    </lineage>
</organism>
<keyword id="KW-0687">Ribonucleoprotein</keyword>
<keyword id="KW-0689">Ribosomal protein</keyword>
<keyword id="KW-0694">RNA-binding</keyword>
<keyword id="KW-0699">rRNA-binding</keyword>
<dbReference type="EMBL" id="CP000048">
    <property type="protein sequence ID" value="AAX16991.1"/>
    <property type="molecule type" value="Genomic_DNA"/>
</dbReference>
<dbReference type="RefSeq" id="WP_011772429.1">
    <property type="nucleotide sequence ID" value="NZ_CP073136.1"/>
</dbReference>
<dbReference type="SMR" id="B2S0I5"/>
<dbReference type="GeneID" id="71843300"/>
<dbReference type="KEGG" id="bhr:BH0482"/>
<dbReference type="HOGENOM" id="CLU_144911_0_1_12"/>
<dbReference type="Proteomes" id="UP000008834">
    <property type="component" value="Chromosome"/>
</dbReference>
<dbReference type="GO" id="GO:0005737">
    <property type="term" value="C:cytoplasm"/>
    <property type="evidence" value="ECO:0007669"/>
    <property type="project" value="UniProtKB-ARBA"/>
</dbReference>
<dbReference type="GO" id="GO:0015935">
    <property type="term" value="C:small ribosomal subunit"/>
    <property type="evidence" value="ECO:0007669"/>
    <property type="project" value="InterPro"/>
</dbReference>
<dbReference type="GO" id="GO:0019843">
    <property type="term" value="F:rRNA binding"/>
    <property type="evidence" value="ECO:0007669"/>
    <property type="project" value="UniProtKB-UniRule"/>
</dbReference>
<dbReference type="GO" id="GO:0003735">
    <property type="term" value="F:structural constituent of ribosome"/>
    <property type="evidence" value="ECO:0007669"/>
    <property type="project" value="InterPro"/>
</dbReference>
<dbReference type="GO" id="GO:0000028">
    <property type="term" value="P:ribosomal small subunit assembly"/>
    <property type="evidence" value="ECO:0007669"/>
    <property type="project" value="TreeGrafter"/>
</dbReference>
<dbReference type="GO" id="GO:0006412">
    <property type="term" value="P:translation"/>
    <property type="evidence" value="ECO:0007669"/>
    <property type="project" value="UniProtKB-UniRule"/>
</dbReference>
<dbReference type="FunFam" id="3.30.860.10:FF:000001">
    <property type="entry name" value="30S ribosomal protein S19"/>
    <property type="match status" value="1"/>
</dbReference>
<dbReference type="Gene3D" id="3.30.860.10">
    <property type="entry name" value="30s Ribosomal Protein S19, Chain A"/>
    <property type="match status" value="1"/>
</dbReference>
<dbReference type="HAMAP" id="MF_00531">
    <property type="entry name" value="Ribosomal_uS19"/>
    <property type="match status" value="1"/>
</dbReference>
<dbReference type="InterPro" id="IPR002222">
    <property type="entry name" value="Ribosomal_uS19"/>
</dbReference>
<dbReference type="InterPro" id="IPR005732">
    <property type="entry name" value="Ribosomal_uS19_bac-type"/>
</dbReference>
<dbReference type="InterPro" id="IPR020934">
    <property type="entry name" value="Ribosomal_uS19_CS"/>
</dbReference>
<dbReference type="InterPro" id="IPR023575">
    <property type="entry name" value="Ribosomal_uS19_SF"/>
</dbReference>
<dbReference type="NCBIfam" id="TIGR01050">
    <property type="entry name" value="rpsS_bact"/>
    <property type="match status" value="1"/>
</dbReference>
<dbReference type="PANTHER" id="PTHR11880">
    <property type="entry name" value="RIBOSOMAL PROTEIN S19P FAMILY MEMBER"/>
    <property type="match status" value="1"/>
</dbReference>
<dbReference type="PANTHER" id="PTHR11880:SF8">
    <property type="entry name" value="SMALL RIBOSOMAL SUBUNIT PROTEIN US19M"/>
    <property type="match status" value="1"/>
</dbReference>
<dbReference type="Pfam" id="PF00203">
    <property type="entry name" value="Ribosomal_S19"/>
    <property type="match status" value="1"/>
</dbReference>
<dbReference type="PIRSF" id="PIRSF002144">
    <property type="entry name" value="Ribosomal_S19"/>
    <property type="match status" value="1"/>
</dbReference>
<dbReference type="PRINTS" id="PR00975">
    <property type="entry name" value="RIBOSOMALS19"/>
</dbReference>
<dbReference type="SUPFAM" id="SSF54570">
    <property type="entry name" value="Ribosomal protein S19"/>
    <property type="match status" value="1"/>
</dbReference>
<dbReference type="PROSITE" id="PS00323">
    <property type="entry name" value="RIBOSOMAL_S19"/>
    <property type="match status" value="1"/>
</dbReference>
<protein>
    <recommendedName>
        <fullName evidence="1">Small ribosomal subunit protein uS19</fullName>
    </recommendedName>
    <alternativeName>
        <fullName evidence="2">30S ribosomal protein S19</fullName>
    </alternativeName>
</protein>
<proteinExistence type="inferred from homology"/>
<feature type="chain" id="PRO_1000127934" description="Small ribosomal subunit protein uS19">
    <location>
        <begin position="1"/>
        <end position="92"/>
    </location>
</feature>
<comment type="function">
    <text evidence="1">Protein S19 forms a complex with S13 that binds strongly to the 16S ribosomal RNA.</text>
</comment>
<comment type="similarity">
    <text evidence="1">Belongs to the universal ribosomal protein uS19 family.</text>
</comment>
<reference key="1">
    <citation type="submission" date="2004-12" db="EMBL/GenBank/DDBJ databases">
        <title>The genome sequence of Borrelia hermsii and Borrelia turicatae: comparative analysis of two agents of endemic N. America relapsing fever.</title>
        <authorList>
            <person name="Porcella S.F."/>
            <person name="Raffel S.J."/>
            <person name="Schrumpf M.E."/>
            <person name="Montgomery B."/>
            <person name="Smith T."/>
            <person name="Schwan T.G."/>
        </authorList>
    </citation>
    <scope>NUCLEOTIDE SEQUENCE [LARGE SCALE GENOMIC DNA]</scope>
    <source>
        <strain>HS1 / DAH</strain>
    </source>
</reference>
<accession>B2S0I5</accession>
<name>RS19_BORHD</name>
<gene>
    <name evidence="1" type="primary">rpsS</name>
    <name type="ordered locus">BH0482</name>
</gene>